<comment type="function">
    <molecule>Polyprotein P1234</molecule>
    <text evidence="6">Inactive precursor of the viral replicase, which is activated by cleavages carried out by the viral protease nsP2.</text>
</comment>
<comment type="function">
    <molecule>Polyprotein P123</molecule>
    <text evidence="2">The early replication complex formed by the polyprotein P123 and nsP4 synthesizes minus-strand RNAs (By similarity). As soon P123 is cleaved into mature proteins, the plus-strand RNAs synthesis begins (By similarity).</text>
</comment>
<comment type="function">
    <molecule>Polyprotein P123'</molecule>
    <text evidence="13">The early replication complex formed by the polyprotein P123' and nsP4 synthesizes minus-strand RNAs (Probable). Polyprotein P123' is a short-lived polyprotein that accumulates during early stage of infection (Probable). As soon P123' is cleaved into mature proteins, the plus-strand RNAs synthesis begins (Probable).</text>
</comment>
<comment type="function">
    <molecule>mRNA-capping enzyme nsP1</molecule>
    <text evidence="2 3 6 13">Cytoplasmic capping enzyme that catalyzes two virus-specific reactions: methyltransferase and nsP1 guanylyltransferase (By similarity). mRNA-capping is necessary since all viral RNAs are synthesized in the cytoplasm, and host capping enzymes are restricted to the nucleus (Probable). The enzymatic reaction involves a covalent link between 7-methyl-GMP and nsP1, whereas eukaryotic capping enzymes form a covalent complex only with GMP (By similarity). nsP1 capping consists in the following reactions: GTP is first methylated into 7-methyl-GMP and then is covalently linked to nsP1 to form the m7GMp-nsP1 complex from which 7-methyl-GMP complex is transferred to the mRNA to create the cap structure (By similarity). NsP1 is needed for the initiation of the minus-strand RNAs synthesis (By similarity). Probably serves as a membrane anchor for the replication complex composed of nsP1-nsP4 (By similarity). Palmitoylated nsP1 is remodeling host cell cytoskeleton, and induces filopodium-like structure formation at the surface of the host cell (By similarity).</text>
</comment>
<comment type="function">
    <molecule>Protease nsP2</molecule>
    <text evidence="2 3 6">Multifunctional protein whose N-terminus is part of the RNA polymerase complex and displays NTPase, RNA triphosphatase and helicase activities (By similarity). NTPase and RNA triphosphatase are involved in viral RNA capping and helicase keeps a check on the dsRNA replication intermediates (By similarity). The C-terminus harbors a protease that specifically cleaves the polyproteins and releases the mature proteins (By similarity). Required for the shutoff of minus-strand RNAs synthesis (By similarity). Specifically inhibits the host IFN response by promoting the nuclear export of host STAT1 (By similarity). Also inhibits host transcription by inducing rapid proteasome-dependent degradation of POLR2A, a catalytic subunit of the RNAPII complex (By similarity). The resulting inhibition of cellular protein synthesis serves to ensure maximal viral gene expression and to evade host immune response (By similarity).</text>
</comment>
<comment type="function">
    <molecule>Non-structural protein 3'</molecule>
    <text evidence="2 13">Seems to be essential for minus-strand RNAs and subgenomic 26S mRNAs synthesis (By similarity). Displays mono-ADP-ribosylhydrolase activity (Probable). ADP-ribosylation is a post-translational modification that controls various processes of the host cell and the virus probably needs to revert it for optimal viral replication (Probable). Binds proteins of FXR family and sequesters them into the viral RNA replication complexes thereby inhibiting the formation of host stress granules on viral mRNAs (Probable). The nsp3-FXR complexes bind viral RNAs and probably orchestrate the assembly of viral replication complexes, thanks to the ability of FXR family members to self-assemble and bind DNA (Probable).</text>
</comment>
<comment type="function">
    <molecule>Non-structural protein 3</molecule>
    <text evidence="2 6">Seems to be essential for minus-strand RNAs and subgenomic 26S mRNAs synthesis (By similarity). Displays mono-ADP-ribosylhydrolase activity (By similarity). ADP-ribosylation is a post-translantional modification that controls various processes of the host cell and the virus probably needs to revert it for optimal viral replication (By similarity). Binds proteins of G3BP family and sequesters them into the viral RNA replication complexes thereby inhibiting the formation of host stress granules on viral mRNAs (By similarity). The nsp3'-G3BP complexes bind viral RNAs and probably orchestrate the assembly of viral replication complexes, thanks to the ability of G3BP family members to self-assemble and bind DNA (By similarity).</text>
</comment>
<comment type="function">
    <molecule>RNA-directed RNA polymerase nsP4</molecule>
    <text evidence="2">RNA dependent RNA polymerase (By similarity). Replicates genomic and antigenomic RNA by recognizing replications specific signals. The early replication complex formed by the polyprotein P123 and nsP4 synthesizes minus-strand RNAs (By similarity). The late replication complex composed of fully processed nsP1-nsP4 is responsible for the production of genomic and subgenomic plus-strand RNAs (By similarity). The core catalytic domain of nsP4 also possesses terminal adenylyltransferase (TATase) activity that is probably involved in maintenance and repair of the poly(A) tail, an element required for replication of the viral genome (By similarity).</text>
</comment>
<comment type="catalytic activity">
    <reaction evidence="4">
        <text>GTP + S-adenosyl-L-methionine = N(7)-methyl-GTP + S-adenosyl-L-homocysteine</text>
        <dbReference type="Rhea" id="RHEA:46948"/>
        <dbReference type="ChEBI" id="CHEBI:37565"/>
        <dbReference type="ChEBI" id="CHEBI:57856"/>
        <dbReference type="ChEBI" id="CHEBI:59789"/>
        <dbReference type="ChEBI" id="CHEBI:87133"/>
    </reaction>
</comment>
<comment type="catalytic activity">
    <reaction evidence="2">
        <text>N(7)-methyl-GTP + L-histidyl-[protein] = N(tele)-(N(7)-methylguanosine 5'-phospho)-L-histidyl-[protein] + diphosphate</text>
        <dbReference type="Rhea" id="RHEA:54792"/>
        <dbReference type="Rhea" id="RHEA-COMP:9745"/>
        <dbReference type="Rhea" id="RHEA-COMP:13995"/>
        <dbReference type="ChEBI" id="CHEBI:29979"/>
        <dbReference type="ChEBI" id="CHEBI:33019"/>
        <dbReference type="ChEBI" id="CHEBI:87133"/>
        <dbReference type="ChEBI" id="CHEBI:138334"/>
    </reaction>
    <physiologicalReaction direction="left-to-right" evidence="2">
        <dbReference type="Rhea" id="RHEA:54793"/>
    </physiologicalReaction>
</comment>
<comment type="catalytic activity">
    <reaction evidence="4">
        <text>N(tele)-(N(7)-methylguanosine 5'-phospho)-L-histidyl-[protein] + a 5'-end diphospho-(purine-ribonucleoside) in mRNA + H(+) = a 5'-end (N(7)-methyl 5'-triphosphoguanosine)-(purine-ribonucleoside) in mRNA + L-histidyl-[protein]</text>
        <dbReference type="Rhea" id="RHEA:54800"/>
        <dbReference type="Rhea" id="RHEA-COMP:9745"/>
        <dbReference type="Rhea" id="RHEA-COMP:12925"/>
        <dbReference type="Rhea" id="RHEA-COMP:13929"/>
        <dbReference type="Rhea" id="RHEA-COMP:13995"/>
        <dbReference type="ChEBI" id="CHEBI:15378"/>
        <dbReference type="ChEBI" id="CHEBI:29979"/>
        <dbReference type="ChEBI" id="CHEBI:133968"/>
        <dbReference type="ChEBI" id="CHEBI:138276"/>
        <dbReference type="ChEBI" id="CHEBI:138334"/>
    </reaction>
</comment>
<comment type="catalytic activity">
    <reaction evidence="3">
        <text>a 5'-end triphospho-ribonucleoside in mRNA + H2O = a 5'-end diphospho-ribonucleoside in mRNA + phosphate + H(+)</text>
        <dbReference type="Rhea" id="RHEA:67004"/>
        <dbReference type="Rhea" id="RHEA-COMP:17164"/>
        <dbReference type="Rhea" id="RHEA-COMP:17165"/>
        <dbReference type="ChEBI" id="CHEBI:15377"/>
        <dbReference type="ChEBI" id="CHEBI:15378"/>
        <dbReference type="ChEBI" id="CHEBI:43474"/>
        <dbReference type="ChEBI" id="CHEBI:167616"/>
        <dbReference type="ChEBI" id="CHEBI:167618"/>
        <dbReference type="EC" id="3.6.1.74"/>
    </reaction>
    <physiologicalReaction direction="left-to-right" evidence="3">
        <dbReference type="Rhea" id="RHEA:67005"/>
    </physiologicalReaction>
</comment>
<comment type="catalytic activity">
    <reaction evidence="6">
        <text>a ribonucleoside 5'-triphosphate + H2O = a ribonucleoside 5'-diphosphate + phosphate + H(+)</text>
        <dbReference type="Rhea" id="RHEA:23680"/>
        <dbReference type="ChEBI" id="CHEBI:15377"/>
        <dbReference type="ChEBI" id="CHEBI:15378"/>
        <dbReference type="ChEBI" id="CHEBI:43474"/>
        <dbReference type="ChEBI" id="CHEBI:57930"/>
        <dbReference type="ChEBI" id="CHEBI:61557"/>
        <dbReference type="EC" id="3.6.1.15"/>
    </reaction>
</comment>
<comment type="catalytic activity">
    <reaction evidence="6">
        <text>ATP + H2O = ADP + phosphate + H(+)</text>
        <dbReference type="Rhea" id="RHEA:13065"/>
        <dbReference type="ChEBI" id="CHEBI:15377"/>
        <dbReference type="ChEBI" id="CHEBI:15378"/>
        <dbReference type="ChEBI" id="CHEBI:30616"/>
        <dbReference type="ChEBI" id="CHEBI:43474"/>
        <dbReference type="ChEBI" id="CHEBI:456216"/>
        <dbReference type="EC" id="3.6.4.13"/>
    </reaction>
</comment>
<comment type="catalytic activity">
    <reaction evidence="8">
        <text>RNA(n) + a ribonucleoside 5'-triphosphate = RNA(n+1) + diphosphate</text>
        <dbReference type="Rhea" id="RHEA:21248"/>
        <dbReference type="Rhea" id="RHEA-COMP:14527"/>
        <dbReference type="Rhea" id="RHEA-COMP:17342"/>
        <dbReference type="ChEBI" id="CHEBI:33019"/>
        <dbReference type="ChEBI" id="CHEBI:61557"/>
        <dbReference type="ChEBI" id="CHEBI:140395"/>
        <dbReference type="EC" id="2.7.7.48"/>
    </reaction>
</comment>
<comment type="catalytic activity">
    <reaction evidence="2">
        <text>RNA(n) + ATP = RNA(n)-3'-adenine ribonucleotide + diphosphate</text>
        <dbReference type="Rhea" id="RHEA:11332"/>
        <dbReference type="Rhea" id="RHEA-COMP:14527"/>
        <dbReference type="Rhea" id="RHEA-COMP:17347"/>
        <dbReference type="ChEBI" id="CHEBI:30616"/>
        <dbReference type="ChEBI" id="CHEBI:33019"/>
        <dbReference type="ChEBI" id="CHEBI:140395"/>
        <dbReference type="ChEBI" id="CHEBI:173115"/>
        <dbReference type="EC" id="2.7.7.19"/>
    </reaction>
</comment>
<comment type="catalytic activity">
    <reaction evidence="2">
        <text>4-O-(ADP-D-ribosyl)-L-aspartyl-[protein] + H2O = L-aspartyl-[protein] + ADP-D-ribose + H(+)</text>
        <dbReference type="Rhea" id="RHEA:54428"/>
        <dbReference type="Rhea" id="RHEA-COMP:9867"/>
        <dbReference type="Rhea" id="RHEA-COMP:13832"/>
        <dbReference type="ChEBI" id="CHEBI:15377"/>
        <dbReference type="ChEBI" id="CHEBI:15378"/>
        <dbReference type="ChEBI" id="CHEBI:29961"/>
        <dbReference type="ChEBI" id="CHEBI:57967"/>
        <dbReference type="ChEBI" id="CHEBI:138102"/>
    </reaction>
    <physiologicalReaction direction="left-to-right" evidence="2">
        <dbReference type="Rhea" id="RHEA:54429"/>
    </physiologicalReaction>
</comment>
<comment type="catalytic activity">
    <reaction evidence="2">
        <text>5-O-(ADP-D-ribosyl)-L-glutamyl-[protein] + H2O = L-glutamyl-[protein] + ADP-D-ribose + H(+)</text>
        <dbReference type="Rhea" id="RHEA:58248"/>
        <dbReference type="Rhea" id="RHEA-COMP:10208"/>
        <dbReference type="Rhea" id="RHEA-COMP:15089"/>
        <dbReference type="ChEBI" id="CHEBI:15377"/>
        <dbReference type="ChEBI" id="CHEBI:15378"/>
        <dbReference type="ChEBI" id="CHEBI:29973"/>
        <dbReference type="ChEBI" id="CHEBI:57967"/>
        <dbReference type="ChEBI" id="CHEBI:142540"/>
    </reaction>
    <physiologicalReaction direction="left-to-right" evidence="2">
        <dbReference type="Rhea" id="RHEA:58249"/>
    </physiologicalReaction>
</comment>
<comment type="catalytic activity">
    <reaction evidence="6">
        <text>ADP-alpha-D-ribose 1''-phosphate + H2O = ADP-D-ribose + phosphate</text>
        <dbReference type="Rhea" id="RHEA:25029"/>
        <dbReference type="ChEBI" id="CHEBI:15377"/>
        <dbReference type="ChEBI" id="CHEBI:43474"/>
        <dbReference type="ChEBI" id="CHEBI:57967"/>
        <dbReference type="ChEBI" id="CHEBI:58753"/>
        <dbReference type="EC" id="3.1.3.84"/>
    </reaction>
    <physiologicalReaction direction="left-to-right" evidence="6">
        <dbReference type="Rhea" id="RHEA:25030"/>
    </physiologicalReaction>
</comment>
<comment type="cofactor">
    <cofactor evidence="2">
        <name>Mg(2+)</name>
        <dbReference type="ChEBI" id="CHEBI:18420"/>
    </cofactor>
    <cofactor evidence="2">
        <name>Mn(2+)</name>
        <dbReference type="ChEBI" id="CHEBI:29035"/>
    </cofactor>
    <text evidence="2">For nsP4 adenylyltransferase activity; Mn(2+) supports catalysis at 60% of the levels observed with Mg(2+).</text>
</comment>
<comment type="cofactor">
    <cofactor evidence="2">
        <name>Mg(2+)</name>
        <dbReference type="ChEBI" id="CHEBI:18420"/>
    </cofactor>
    <text evidence="2">For nsP4 RNA-directed RNA polymerase activity.</text>
</comment>
<comment type="cofactor">
    <cofactor evidence="4">
        <name>Mg(2+)</name>
        <dbReference type="ChEBI" id="CHEBI:18420"/>
    </cofactor>
    <text evidence="4">For nsP1 guanylylation.</text>
</comment>
<comment type="cofactor">
    <cofactor>
        <name>Mg(2+)</name>
        <dbReference type="ChEBI" id="CHEBI:18420"/>
    </cofactor>
    <text evidence="6">For nsP2 RNA triphosphatase activity.</text>
</comment>
<comment type="cofactor">
    <cofactor>
        <name>Mg(2+)</name>
        <dbReference type="ChEBI" id="CHEBI:18420"/>
    </cofactor>
    <text evidence="6">For nsP2 NTPase activity.</text>
</comment>
<comment type="subunit">
    <molecule>mRNA-capping enzyme nsP1</molecule>
    <text evidence="2 4">Interacts with non-structural protein 3 (By similarity). Interacts with RNA-directed RNA polymerase nsP4 (By similarity). Interacts with protease nsP2 (By similarity). interacts with itself (By similarity).</text>
</comment>
<comment type="subunit">
    <molecule>Non-structural protein 3</molecule>
    <text evidence="2 4">Interacts with mRNA-capping enzyme nsP1 (By similarity). Interacts with host DDX1 (By similarity). Interacts with host DDX3 (By similarity). Interacts (via C-terminus) with host G3BP1; this interaction inhibits the formation of host stress granules on viral mRNAs and the nsp3-G3BP1 complexes bind viral RNAs and probably orchestrate the assembly of viral replication complexes (By similarity). Interacts (via C-terminus) with host G3BP2; this interaction inhibits the formation of host stress granules on viral mRNAs and the nsp3-G3BP2 complexes bind viral RNAs and probably orchestrate the assembly of viral replication complexes (By similarity).</text>
</comment>
<comment type="subunit">
    <molecule>RNA-directed RNA polymerase nsP4</molecule>
    <text evidence="2 4">Interacts with mRNA-capping enzyme nsP1 (By similarity). Interacts with protease nsP2 (By similarity). interacts with itself (By similarity).</text>
</comment>
<comment type="subunit">
    <molecule>Protease nsP2</molecule>
    <text evidence="2 4">Interacts with RNA-directed RNA polymerase nsP4 (By similarity). Interacts with mRNA-capping enzyme nsP1 (By similarity). Interacts with KPNA1/karyopherin-alpha1; this interaction probably allows the active transport of protease nsP2 into the host nucleus (By similarity).</text>
</comment>
<comment type="subcellular location">
    <molecule>Polyprotein P1234</molecule>
    <subcellularLocation>
        <location evidence="13">Host cytoplasmic vesicle membrane</location>
        <topology evidence="13">Peripheral membrane protein</topology>
    </subcellularLocation>
    <text evidence="13">Part of cytoplasmic vesicles, which are probably formed at the plasma membrane and internalized leading to late endosomal/lysosomal spherules containing the replication complex.</text>
</comment>
<comment type="subcellular location">
    <molecule>Polyprotein P123'</molecule>
    <subcellularLocation>
        <location evidence="13">Host cytoplasmic vesicle membrane</location>
        <topology evidence="13">Peripheral membrane protein</topology>
    </subcellularLocation>
    <text evidence="13">Part of cytoplasmic vesicles, which are probably formed at the plasma membrane and internalized leading to late endosomal/lysosomal spherules containing the replication complex.</text>
</comment>
<comment type="subcellular location">
    <molecule>Polyprotein P123</molecule>
    <subcellularLocation>
        <location evidence="13">Host cytoplasmic vesicle membrane</location>
        <topology evidence="13">Peripheral membrane protein</topology>
    </subcellularLocation>
    <text evidence="13">Part of cytoplasmic vesicles, which are probably formed at the plasma membrane and internalized leading to late endosomal/lysosomal spherules containing the replication complex.</text>
</comment>
<comment type="subcellular location">
    <molecule>mRNA-capping enzyme nsP1</molecule>
    <subcellularLocation>
        <location evidence="3">Host cytoplasmic vesicle membrane</location>
        <topology evidence="3">Lipid-anchor</topology>
    </subcellularLocation>
    <subcellularLocation>
        <location evidence="3">Host cell membrane</location>
        <topology evidence="3">Lipid-anchor</topology>
        <orientation evidence="3">Cytoplasmic side</orientation>
    </subcellularLocation>
    <subcellularLocation>
        <location evidence="3">Host cell projection</location>
        <location evidence="3">Host filopodium</location>
    </subcellularLocation>
    <text evidence="3">In the late phase of infection, the polyprotein is quickly cleaved before localization to cellular membranes. Then a fraction of nsP1 localizes to the inner surface of the plasma membrane and its filopodial extensions. Only the palmitoylated nsP1 localizes to the host filopodia (By similarity). NsP1 is also part of cytoplasmic vesicles, which are probably formed at the plasma membrane and internalized leading to late endosomal/lysosomal spherules containing the replication complex (By similarity).</text>
</comment>
<comment type="subcellular location">
    <molecule>Protease nsP2</molecule>
    <subcellularLocation>
        <location evidence="3">Host cytoplasmic vesicle membrane</location>
        <topology evidence="3">Peripheral membrane protein</topology>
    </subcellularLocation>
    <subcellularLocation>
        <location evidence="4">Host nucleus</location>
    </subcellularLocation>
    <subcellularLocation>
        <location evidence="4">Host cytoplasm</location>
    </subcellularLocation>
    <text evidence="3 4">In the late phase of infection, the polyprotein is quickly cleaved before localization to cellular membranes. Then approximately half of nsP2 is found in the nucleus (By similarity). Shuttles between cytoplasm and nucleus (By similarity). NsP2 is also part of cytoplasmic vesicles, which are probably formed at the plasma membrane and internalized leading to late endosomal/lysosomal spherules containing the replication complex (By similarity).</text>
</comment>
<comment type="subcellular location">
    <molecule>Non-structural protein 3</molecule>
    <subcellularLocation>
        <location evidence="2">Host cytoplasmic vesicle membrane</location>
        <topology evidence="13">Peripheral membrane protein</topology>
    </subcellularLocation>
    <text evidence="2">In the late phase of infection, the polyprotein is quickly cleaved before localization to cellular membranes. Then nsP3 and nsP3' form aggregates in cytoplasm (By similarity). NsP3 is also part of cytoplasmic vesicles, which are probably formed at the plasma membrane and internalized leading to late endosomal/lysosomal spherules containing the replication complex (By similarity).</text>
</comment>
<comment type="subcellular location">
    <molecule>Non-structural protein 3'</molecule>
    <subcellularLocation>
        <location evidence="2">Host cytoplasmic vesicle membrane</location>
        <topology evidence="13">Peripheral membrane protein</topology>
    </subcellularLocation>
    <text evidence="2">In the late phase of infection, the polyprotein is quickly cleaved before localization to cellular membranes. Then nsP3 and nsP3' form aggregates in cytoplasm (By similarity). NsP3' is also part of cytoplasmic vesicles, which are probably formed at the plasma membrane and internalized leading to late endosomal/lysosomal spherules containing the replication complex (By similarity).</text>
</comment>
<comment type="subcellular location">
    <molecule>RNA-directed RNA polymerase nsP4</molecule>
    <subcellularLocation>
        <location>Host cytoplasmic vesicle membrane</location>
        <topology evidence="2">Peripheral membrane protein</topology>
    </subcellularLocation>
    <text evidence="3">NsP4 is part of cytoplasmic vesicles, which are probably formed at the plasma membrane and internalized leading to late endosomal/lysosomal spherules containing the replication complex.</text>
</comment>
<comment type="domain">
    <molecule>Protease nsP2</molecule>
    <text evidence="4 6">The N-terminus exhibits NTPase and RNA triphosphatase activities and is proposed to have helicase activity, whereas the C-terminus possesses protease activity (By similarity). Contains a nuclear localization signal and a nuclear export signal, these two motifs are probably involved in the shuttling between the cytoplasm and the nucleus of nsP2 (By similarity). The C-terminus is required for promoting the export of host STAT1 (By similarity).</text>
</comment>
<comment type="domain">
    <molecule>Non-structural protein 3</molecule>
    <text evidence="2 3">In the N-terminus, the macro domain displays a mono-ADP-ribosylhydrolase activity (By similarity). The central part has a zinc-binding function (By similarity). The C-terminus contains two FGDF motifs necessary and sufficient for formation of the nsP3/G3BP1 complex (By similarity).</text>
</comment>
<comment type="domain">
    <molecule>Non-structural protein 3'</molecule>
    <text evidence="2 3">In the N-terminus, the macro domain displays a mono-ADP-ribosylhydrolase activity (By similarity). The central part has a zinc-binding function (By similarity). The C-terminus contains two FGDF motifs necessary and sufficient for formation of the nsP3'/G3BP1 complex (By similarity).</text>
</comment>
<comment type="PTM">
    <molecule>Polyprotein P1234</molecule>
    <text evidence="2">Specific enzymatic cleavages in vivo yield mature proteins (By similarity). The processing of the polyprotein is temporally regulated (By similarity). In early stages (1.7 hpi), P1234 is first cleaved in trans through its nsP2 protease activity, releasing P123' and nsP4, which associate to form the early replication complex (By similarity). At the same time, P1234 is also cut at the nsP1/nsP2 site early in infection but with lower efficiency (By similarity). After replication of the viral minus-strand RNAs (4 hpi), the polyproteins are cut at the nsP1/nsP2 and nsP2/nsP3 sites very efficiently, preventing accumulation of P123' and P1234 and allowing the formation of the late replication complex (By similarity). NsP3'/nsP4 site is not cleaved anymore and P34 is produced rather than nsP4 (By similarity).</text>
</comment>
<comment type="PTM">
    <molecule>Polyprotein P123</molecule>
    <text evidence="2">Specific enzymatic cleavages in vivo yield mature proteins (By similarity). The processing of the polyprotein is temporally regulated (By similarity). In early stages (1.7 hpi), P123 is cleaved at the nsP1/nsP2 site with low efficiency (By similarity). After replication of the viral minus-strand RNAs (4 hpi), the polyproteins are cut at the nsP1/nsP2 and nsP2/nsP3 sites very efficiently, preventing accumulation of P123 and allowing the formation of the late replication complex (By similarity).</text>
</comment>
<comment type="PTM">
    <molecule>Polyprotein P123'</molecule>
    <text evidence="2">Specific enzymatic cleavages in vivo yield mature proteins (By similarity). The processing of the polyprotein is temporally regulated (By similarity). In early stages (1.7 hpi), P123' is cleaved at the nsP1/nsP2 site with low efficiency (By similarity). After replication of the viral minus-strand RNAs (4 hpi), the polyproteins are cut at the nsP1/nsP2 and nsP2/nsP3 sites very efficiently, preventing accumulation of P123' and allowing the formation of the late replication complex (By similarity).</text>
</comment>
<comment type="PTM">
    <molecule>mRNA-capping enzyme nsP1</molecule>
    <text evidence="6">Palmitoylated by host palmitoyltransferases ZDHHC2 and ZDHHC19.</text>
</comment>
<comment type="PTM">
    <molecule>Non-structural protein 3</molecule>
    <text evidence="3">Phosphorylated by host on serines and threonines.</text>
</comment>
<comment type="PTM">
    <molecule>Non-structural protein 3'</molecule>
    <text evidence="3">Phosphorylated by host on serines and threonines.</text>
</comment>
<comment type="PTM">
    <molecule>RNA-directed RNA polymerase nsP4</molecule>
    <text evidence="2">Ubiquitinated; targets the protein for rapid degradation via the ubiquitin system (By similarity). Nsp4 is present in extremely low quantities due to low frequency of translation through the amber stop-codon and the degradation by the ubiquitin pathway (By similarity).</text>
</comment>
<comment type="miscellaneous">
    <text evidence="2">Viral replication produces dsRNA in the late phase of infection, resulting in a strong activation of host EIF2AK2/PKR, leading to almost complete phosphorylation of EIF2A (By similarity). This inactivates completely cellular translation initiation, resulting shutoff of host proteins synthesis (By similarity). However, phosphorylation of EIF2A is probably not the only mechanism responsible for the host translation shutoff (By similarity). The viral translation can still occur normally because it relies on a hairpin structure in the coding region of sgRNA and is EIF2A-, EIF2D-, EIF4G- EIF4A-independent (By similarity).</text>
</comment>
<comment type="miscellaneous">
    <text evidence="1 2 13">The genome codes for P123, but readthrough of a terminator codon UGA occurs between the codons for Glu-1794 and Leu-1796 giving rise to P1234 (Probable). P1234 is cleaved quickly by nsP2 into P123' and nsP4 (By similarity). Further processing of p123' gives nsP1, nsP2 and nsP3' which is 6 amino acids longer than nsP3 since the cleavage site is after the readthrough (By similarity). This unusual molecular mechanism ensures that few nsP4 are produced compared to other non-structural proteins (By similarity). Mutant viruses with no alternative termination site grow significantly slower than wild-type virus (By similarity). The opal termination codon is frequently mutated to a sense codon on passage in cell culture (By similarity). The presence of the opal codon may be a requirement for viral maintenance in both vertebrate and invertebrate hosts and a selective advantage may be conferred in cell culture for the sense codon (By similarity).</text>
</comment>
<feature type="chain" id="PRO_0000308383" description="Polyprotein P1234">
    <location>
        <begin position="1"/>
        <end position="2410"/>
    </location>
</feature>
<feature type="chain" id="PRO_0000228736" description="Polyprotein P123'">
    <location>
        <begin position="1"/>
        <end position="1801"/>
    </location>
</feature>
<feature type="chain" id="PRO_0000228737" description="Polyprotein P123">
    <location>
        <begin position="1"/>
        <end position="1794"/>
    </location>
</feature>
<feature type="chain" id="PRO_0000228738" description="mRNA-capping enzyme nsP1">
    <location>
        <begin position="1"/>
        <end position="533"/>
    </location>
</feature>
<feature type="chain" id="PRO_0000228739" description="Protease nsP2">
    <location>
        <begin position="534"/>
        <end position="1331"/>
    </location>
</feature>
<feature type="chain" id="PRO_0000228740" description="Non-structural protein 3'">
    <location>
        <begin position="1332"/>
        <end position="1801"/>
    </location>
</feature>
<feature type="chain" id="PRO_0000228741" description="Non-structural protein 3">
    <location>
        <begin position="1332"/>
        <end position="1794"/>
    </location>
</feature>
<feature type="chain" id="PRO_0000228742" description="RNA-directed RNA polymerase nsP4">
    <location>
        <begin position="1801"/>
        <end position="2411"/>
    </location>
</feature>
<feature type="domain" description="Alphavirus-like MT" evidence="11">
    <location>
        <begin position="30"/>
        <end position="257"/>
    </location>
</feature>
<feature type="domain" description="(+)RNA virus helicase ATP-binding" evidence="10">
    <location>
        <begin position="688"/>
        <end position="840"/>
    </location>
</feature>
<feature type="domain" description="(+)RNA virus helicase C-terminal" evidence="10">
    <location>
        <begin position="841"/>
        <end position="989"/>
    </location>
</feature>
<feature type="domain" description="Peptidase C9" evidence="9">
    <location>
        <begin position="1002"/>
        <end position="1325"/>
    </location>
</feature>
<feature type="domain" description="Macro" evidence="7">
    <location>
        <begin position="1332"/>
        <end position="1491"/>
    </location>
</feature>
<feature type="domain" description="RdRp catalytic" evidence="8">
    <location>
        <begin position="2165"/>
        <end position="2280"/>
    </location>
</feature>
<feature type="region of interest" description="NsP1 membrane-binding" evidence="3">
    <location>
        <begin position="242"/>
        <end position="261"/>
    </location>
</feature>
<feature type="region of interest" description="Nucleolus localization signal" evidence="3">
    <location>
        <begin position="1003"/>
        <end position="1022"/>
    </location>
</feature>
<feature type="region of interest" description="Disordered" evidence="12">
    <location>
        <begin position="1681"/>
        <end position="1720"/>
    </location>
</feature>
<feature type="short sequence motif" description="Nuclear export signal" evidence="4">
    <location>
        <begin position="1056"/>
        <end position="1065"/>
    </location>
</feature>
<feature type="short sequence motif" description="Nuclear localization signal" evidence="3">
    <location>
        <begin position="1180"/>
        <end position="1184"/>
    </location>
</feature>
<feature type="short sequence motif" description="FGDF; binding to host G3BP1" evidence="3">
    <location>
        <begin position="1760"/>
        <end position="1763"/>
    </location>
</feature>
<feature type="short sequence motif" description="FGDF; binding to host G3BP1" evidence="3">
    <location>
        <begin position="1778"/>
        <end position="1781"/>
    </location>
</feature>
<feature type="active site" description="For cysteine protease nsP2 activity" evidence="9">
    <location>
        <position position="1011"/>
    </location>
</feature>
<feature type="active site" description="For cysteine protease nsP2 activity" evidence="9">
    <location>
        <position position="1081"/>
    </location>
</feature>
<feature type="binding site" evidence="10">
    <location>
        <begin position="719"/>
        <end position="726"/>
    </location>
    <ligand>
        <name>a ribonucleoside 5'-triphosphate</name>
        <dbReference type="ChEBI" id="CHEBI:61557"/>
    </ligand>
</feature>
<feature type="binding site" evidence="5">
    <location>
        <position position="1341"/>
    </location>
    <ligand>
        <name>ADP-D-ribose</name>
        <dbReference type="ChEBI" id="CHEBI:57967"/>
    </ligand>
</feature>
<feature type="binding site" evidence="6">
    <location>
        <position position="1355"/>
    </location>
    <ligand>
        <name>ADP-D-ribose</name>
        <dbReference type="ChEBI" id="CHEBI:57967"/>
    </ligand>
</feature>
<feature type="binding site" evidence="6">
    <location>
        <position position="1363"/>
    </location>
    <ligand>
        <name>ADP-D-ribose</name>
        <dbReference type="ChEBI" id="CHEBI:57967"/>
    </ligand>
</feature>
<feature type="binding site" evidence="5">
    <location>
        <position position="1443"/>
    </location>
    <ligand>
        <name>ADP-D-ribose</name>
        <dbReference type="ChEBI" id="CHEBI:57967"/>
    </ligand>
</feature>
<feature type="binding site" evidence="5">
    <location>
        <position position="1444"/>
    </location>
    <ligand>
        <name>ADP-D-ribose</name>
        <dbReference type="ChEBI" id="CHEBI:57967"/>
    </ligand>
</feature>
<feature type="binding site" evidence="6">
    <location>
        <position position="1445"/>
    </location>
    <ligand>
        <name>ADP-D-ribose</name>
        <dbReference type="ChEBI" id="CHEBI:57967"/>
    </ligand>
</feature>
<feature type="binding site" evidence="2">
    <location>
        <position position="1593"/>
    </location>
    <ligand>
        <name>Zn(2+)</name>
        <dbReference type="ChEBI" id="CHEBI:29105"/>
    </ligand>
</feature>
<feature type="binding site" evidence="2">
    <location>
        <position position="1595"/>
    </location>
    <ligand>
        <name>Zn(2+)</name>
        <dbReference type="ChEBI" id="CHEBI:29105"/>
    </ligand>
</feature>
<feature type="binding site" evidence="2">
    <location>
        <position position="1618"/>
    </location>
    <ligand>
        <name>Zn(2+)</name>
        <dbReference type="ChEBI" id="CHEBI:29105"/>
    </ligand>
</feature>
<feature type="binding site" evidence="2">
    <location>
        <position position="1636"/>
    </location>
    <ligand>
        <name>Zn(2+)</name>
        <dbReference type="ChEBI" id="CHEBI:29105"/>
    </ligand>
</feature>
<feature type="site" description="Involved in the phosphoramide link with 7-methyl-GMP" evidence="4">
    <location>
        <position position="39"/>
    </location>
</feature>
<feature type="site" description="Cleavage; by protease nsP2" evidence="2">
    <location>
        <begin position="533"/>
        <end position="534"/>
    </location>
</feature>
<feature type="site" description="Cleavage; by protease nsP2" evidence="2">
    <location>
        <begin position="1331"/>
        <end position="1332"/>
    </location>
</feature>
<feature type="site" description="Cleavage; by protease nsP2" evidence="6">
    <location>
        <begin position="1801"/>
        <end position="1802"/>
    </location>
</feature>
<feature type="lipid moiety-binding region" description="S-palmitoyl cysteine; by host" evidence="6">
    <location>
        <position position="415"/>
    </location>
</feature>
<feature type="lipid moiety-binding region" description="S-palmitoyl cysteine; by host" evidence="6">
    <location>
        <position position="417"/>
    </location>
</feature>
<sequence>MAKPVVKIDVEPESHFAKQVQSCFPQFEIEAVQTTPNDHAHARAFSHLATKLIEMETAKDQIILDIGSAPARRLYSEHKYHCVCPMKCTEDPERMLGYARKLIAGSAKGKAEKLRDLRDVLATPDIETQSLCLHTDASCRYRGDVAVYQDVYAIDAPTTLYHQALKGVRTAYWIGFDTTPFMYDALAGAYPLYSTNWADEQVLESRNIGLCSDKVSEGGKKGRSILRKKFLKQSDRVMFSVGSTLYTESRKLLQSWHLPSTFHLKGKSSFTCRCDTIVSCEGYVLKKITMCPGVTGKPIGYAVTHHKEGFVVGKVTDTIRGERVSFAVCTYVPTTLCDQMTGILATEVTADDAQKLLVGLNQRIVVNGRTQRNTNTMKNYLLPLVAQALAKWAKEAKQDMEDERPLNERQRTLTCLCCWAFKRNKRHAIYKRPDTQSIVKVPCEFTSFPLVSLWSAGMSISLRQKLKMMLQARQPTQIAAVTEELIQEAAAVEQEAVDTANAELDHAAWPSIVDTTERHVEVEVEELDQRAGEGVVETPRNSIKVSTQIGDALIGSYLILSPQAVLRSEKLACIHDLAEQVKLVTHSGRSGRYAVDKYXGRVLVPTGVAIDIQSFQALSESATLVYNEREFVNRKLWHIAVYGAALNTDEEGYEKVPVERAESDYVFDVDQKMCLKKEQASGWVLCGELVNPPFHEFAYEGLRTRPSAPYKVHTVGVYGVPGSGKSAIIKNTVTMSDLVLSGKKENCLEIMNDVLKHRALRITAKTVDSVLLNGVKHTPNILYIDEAFSCHAGTLLATIAIVRPKQKVVLCGDPKQCGFFNMMQLKVNYNHDICSEVFHKSISRRCTQDITAIVSKLHYQDRMRTTNPRKGDIIIDTTGTTKPAKTDLILTCFRGWVKQLQQDYRGNEVMTAAASQGLTRASVYAVRTKVNENPLYAQTSEHVNVLLTRTENKLVWKTLSTDPWIKTLTNPPRGHYTATIAEWEAEHQGIMKAIQGYAPPVNTFMNKVNVCWAKTLTPVLETAGISLSAEDWSELLPPFAQDVAYSPEVALNIICTKMYGFDLDTGLFSRPSVPMTYTKDHWDNRVGGKMYGFSQQAYDQLARRHPYLRGREKSGMQIVVTEMRIQRPRSDANIIPINRRLPHSLVATHEYRRAARAEEFFTTTRGYTMLLVSEYNMNLPNKKITWLAPIGTQGAHHTANLNLGIPPLLGSFDAVVVNMPTPFRNHHYQQCEDHAMKLQMLAGDALRHIKPGGSLWVKAYGYADRHSEHVVLALARKFKSFRVTQPSCVTSNTEVFLHFSIFDNGKRAIALHSANRKANSIFQNTFLPAGSAPAYRVKRGDISNAPEDAVVNAANQQGVKGAGVCGAIYRKWPDAFGDVATPTGTAVSKSVQDKLVIHAVGPNFSKCSEEEGDRDLASAYRAAAEIVMDKKITTVAVPLLSTGIYAGGKNRVEQSLNHLFTAFDNTDADVTIYCMDKTWEKKIKEAIDHRTSVEMVQDDVQLEEELVRVHPLSSLAGRKGYSTDSGRVFSYLEGTKFHQTAVDIAEMQVLWPALKESNEQIVAYTLGESMDQIRGKCPTEDTDASTPPRTVPCLCRYAMTPERVYRLKCTNTTQFTVCSSFELPKYHIQGVQRVKCERIIILDPTVPPTYKRPCIRRYPSTISCNSSEDSRSLSTFSVSSDSSIGSLPVGDTRPIPAPRTIFRPVPAPRAPVLRTTPPPKPPRTFTVRAEVHQAPPTPVPPPRPKRAAKLAREMHPGFTFGDFGEHEVEELTASPLTFGDFAEGEIQGMGVEFEXLGRAGGYIFSSDTGPGHLQQRSVLQNCTAECIYEPAKLEKIHAPKLDKTKEDILRSKYQMKPSEANKSRYQSRKVENMKAEIVGRLLDGLGEYLGTEHPVECYRITYPVPIYSTSDLRGLSSAKTAVRACNAFLEANFPSVTSYKITDEYDAYLDMVDGSESCLDRSSFSPSRLRSFPKTHSYLDPQINSAVPSPFQNTLQNVLAAATKRNCNVTQMRELPTYDSAVLNVEAFRKYACKPDVWDEYRDNPICITTENVTTYVAKLKGPKAAALFAKTHNLIPLHQVPMDKFTVDMKRDVKVTPGTKHTEERPKVQVIQAAEPLATAYLCGIHRELVRRLNNALFPNIHTLFDMSAEDFDAIIAEHFKHGDHVLETDIASFDKSQDDSMALTALMILEDLGVDQNLMNLIEAAFGEIVSTHLPTGTRFKFGAMMKSGMFLTLFVNTILNVVIACRVLEDQLAQSPWPAFIGDDNIIHGIISDKLMADRCATWMNMEVKILDSIVGIRPPYFCGGFIVCDDVTGTACRVADPLKRLFKLGKPLPLDDGQDEDRRRALHDEVKTWSRVGLRHRVCEAIEDRYAVHSSELVLLALTTLSKNLKSFRNIRGKPIHLYGGPK</sequence>
<name>POLN_BFV</name>
<proteinExistence type="inferred from homology"/>
<accession>P87515</accession>
<dbReference type="EC" id="2.1.1.-" evidence="4"/>
<dbReference type="EC" id="2.7.7.-" evidence="2"/>
<dbReference type="EC" id="3.4.22.-" evidence="6"/>
<dbReference type="EC" id="3.6.1.15" evidence="6"/>
<dbReference type="EC" id="3.6.1.74" evidence="3"/>
<dbReference type="EC" id="3.6.4.13" evidence="6"/>
<dbReference type="EC" id="3.1.3.84" evidence="13 6"/>
<dbReference type="EC" id="2.7.7.19" evidence="2"/>
<dbReference type="EC" id="2.7.7.48" evidence="8"/>
<dbReference type="EMBL" id="U73745">
    <property type="protein sequence ID" value="AAB40701.1"/>
    <property type="status" value="ALT_SEQ"/>
    <property type="molecule type" value="Genomic_RNA"/>
</dbReference>
<dbReference type="RefSeq" id="NP_054023.1">
    <property type="nucleotide sequence ID" value="NC_001786.1"/>
</dbReference>
<dbReference type="IntAct" id="P87515">
    <property type="interactions" value="4"/>
</dbReference>
<dbReference type="GeneID" id="1489700"/>
<dbReference type="KEGG" id="vg:1489700"/>
<dbReference type="Proteomes" id="UP000007609">
    <property type="component" value="Segment"/>
</dbReference>
<dbReference type="GO" id="GO:0044162">
    <property type="term" value="C:host cell cytoplasmic vesicle membrane"/>
    <property type="evidence" value="ECO:0007669"/>
    <property type="project" value="UniProtKB-SubCell"/>
</dbReference>
<dbReference type="GO" id="GO:0044176">
    <property type="term" value="C:host cell filopodium"/>
    <property type="evidence" value="ECO:0007669"/>
    <property type="project" value="UniProtKB-SubCell"/>
</dbReference>
<dbReference type="GO" id="GO:0042025">
    <property type="term" value="C:host cell nucleus"/>
    <property type="evidence" value="ECO:0007669"/>
    <property type="project" value="UniProtKB-SubCell"/>
</dbReference>
<dbReference type="GO" id="GO:0020002">
    <property type="term" value="C:host cell plasma membrane"/>
    <property type="evidence" value="ECO:0007669"/>
    <property type="project" value="UniProtKB-SubCell"/>
</dbReference>
<dbReference type="GO" id="GO:0016020">
    <property type="term" value="C:membrane"/>
    <property type="evidence" value="ECO:0007669"/>
    <property type="project" value="UniProtKB-KW"/>
</dbReference>
<dbReference type="GO" id="GO:0005524">
    <property type="term" value="F:ATP binding"/>
    <property type="evidence" value="ECO:0007669"/>
    <property type="project" value="UniProtKB-KW"/>
</dbReference>
<dbReference type="GO" id="GO:0016887">
    <property type="term" value="F:ATP hydrolysis activity"/>
    <property type="evidence" value="ECO:0007669"/>
    <property type="project" value="RHEA"/>
</dbReference>
<dbReference type="GO" id="GO:0008234">
    <property type="term" value="F:cysteine-type peptidase activity"/>
    <property type="evidence" value="ECO:0007669"/>
    <property type="project" value="UniProtKB-KW"/>
</dbReference>
<dbReference type="GO" id="GO:0005525">
    <property type="term" value="F:GTP binding"/>
    <property type="evidence" value="ECO:0007669"/>
    <property type="project" value="UniProtKB-KW"/>
</dbReference>
<dbReference type="GO" id="GO:0046872">
    <property type="term" value="F:metal ion binding"/>
    <property type="evidence" value="ECO:0007669"/>
    <property type="project" value="UniProtKB-KW"/>
</dbReference>
<dbReference type="GO" id="GO:0140818">
    <property type="term" value="F:mRNA 5'-triphosphate monophosphatase activity"/>
    <property type="evidence" value="ECO:0007669"/>
    <property type="project" value="RHEA"/>
</dbReference>
<dbReference type="GO" id="GO:0008174">
    <property type="term" value="F:mRNA methyltransferase activity"/>
    <property type="evidence" value="ECO:0007669"/>
    <property type="project" value="InterPro"/>
</dbReference>
<dbReference type="GO" id="GO:1990817">
    <property type="term" value="F:poly(A) RNA polymerase activity"/>
    <property type="evidence" value="ECO:0007669"/>
    <property type="project" value="UniProtKB-EC"/>
</dbReference>
<dbReference type="GO" id="GO:0004651">
    <property type="term" value="F:polynucleotide 5'-phosphatase activity"/>
    <property type="evidence" value="ECO:0007669"/>
    <property type="project" value="UniProtKB-EC"/>
</dbReference>
<dbReference type="GO" id="GO:0003723">
    <property type="term" value="F:RNA binding"/>
    <property type="evidence" value="ECO:0007669"/>
    <property type="project" value="UniProtKB-KW"/>
</dbReference>
<dbReference type="GO" id="GO:0003724">
    <property type="term" value="F:RNA helicase activity"/>
    <property type="evidence" value="ECO:0007669"/>
    <property type="project" value="UniProtKB-EC"/>
</dbReference>
<dbReference type="GO" id="GO:0003968">
    <property type="term" value="F:RNA-directed RNA polymerase activity"/>
    <property type="evidence" value="ECO:0007669"/>
    <property type="project" value="UniProtKB-KW"/>
</dbReference>
<dbReference type="GO" id="GO:0006370">
    <property type="term" value="P:7-methylguanosine mRNA capping"/>
    <property type="evidence" value="ECO:0007669"/>
    <property type="project" value="UniProtKB-KW"/>
</dbReference>
<dbReference type="GO" id="GO:0006351">
    <property type="term" value="P:DNA-templated transcription"/>
    <property type="evidence" value="ECO:0007669"/>
    <property type="project" value="InterPro"/>
</dbReference>
<dbReference type="GO" id="GO:0032259">
    <property type="term" value="P:methylation"/>
    <property type="evidence" value="ECO:0007669"/>
    <property type="project" value="UniProtKB-KW"/>
</dbReference>
<dbReference type="GO" id="GO:0016556">
    <property type="term" value="P:mRNA modification"/>
    <property type="evidence" value="ECO:0007669"/>
    <property type="project" value="InterPro"/>
</dbReference>
<dbReference type="GO" id="GO:0006508">
    <property type="term" value="P:proteolysis"/>
    <property type="evidence" value="ECO:0007669"/>
    <property type="project" value="UniProtKB-KW"/>
</dbReference>
<dbReference type="GO" id="GO:0039657">
    <property type="term" value="P:symbiont-mediated suppression of host gene expression"/>
    <property type="evidence" value="ECO:0007669"/>
    <property type="project" value="UniProtKB-KW"/>
</dbReference>
<dbReference type="GO" id="GO:0039523">
    <property type="term" value="P:symbiont-mediated suppression of host mRNA transcription via inhibition of RNA polymerase II activity"/>
    <property type="evidence" value="ECO:0007669"/>
    <property type="project" value="UniProtKB-KW"/>
</dbReference>
<dbReference type="GO" id="GO:0039694">
    <property type="term" value="P:viral RNA genome replication"/>
    <property type="evidence" value="ECO:0007669"/>
    <property type="project" value="InterPro"/>
</dbReference>
<dbReference type="CDD" id="cd21557">
    <property type="entry name" value="Macro_X_Nsp3-like"/>
    <property type="match status" value="1"/>
</dbReference>
<dbReference type="CDD" id="cd23250">
    <property type="entry name" value="Togaviridae_RdRp"/>
    <property type="match status" value="1"/>
</dbReference>
<dbReference type="FunFam" id="3.40.220.10:FF:000015">
    <property type="entry name" value="Polyprotein P1234"/>
    <property type="match status" value="1"/>
</dbReference>
<dbReference type="FunFam" id="3.40.50.300:FF:001415">
    <property type="entry name" value="Polyprotein P1234"/>
    <property type="match status" value="1"/>
</dbReference>
<dbReference type="Gene3D" id="3.90.70.110">
    <property type="entry name" value="Alphavirus nsP2 protease domain"/>
    <property type="match status" value="1"/>
</dbReference>
<dbReference type="Gene3D" id="3.40.220.10">
    <property type="entry name" value="Leucine Aminopeptidase, subunit E, domain 1"/>
    <property type="match status" value="1"/>
</dbReference>
<dbReference type="Gene3D" id="3.40.50.300">
    <property type="entry name" value="P-loop containing nucleotide triphosphate hydrolases"/>
    <property type="match status" value="2"/>
</dbReference>
<dbReference type="Gene3D" id="3.40.50.150">
    <property type="entry name" value="Vaccinia Virus protein VP39"/>
    <property type="match status" value="1"/>
</dbReference>
<dbReference type="InterPro" id="IPR027351">
    <property type="entry name" value="(+)RNA_virus_helicase_core_dom"/>
</dbReference>
<dbReference type="InterPro" id="IPR002588">
    <property type="entry name" value="Alphavirus-like_MT_dom"/>
</dbReference>
<dbReference type="InterPro" id="IPR002620">
    <property type="entry name" value="Alphavirus_nsp2pro"/>
</dbReference>
<dbReference type="InterPro" id="IPR044936">
    <property type="entry name" value="Alphavirus_nsp2pro_sf"/>
</dbReference>
<dbReference type="InterPro" id="IPR043502">
    <property type="entry name" value="DNA/RNA_pol_sf"/>
</dbReference>
<dbReference type="InterPro" id="IPR002589">
    <property type="entry name" value="Macro_dom"/>
</dbReference>
<dbReference type="InterPro" id="IPR043472">
    <property type="entry name" value="Macro_dom-like"/>
</dbReference>
<dbReference type="InterPro" id="IPR044371">
    <property type="entry name" value="Macro_X_NSP3-like"/>
</dbReference>
<dbReference type="InterPro" id="IPR048891">
    <property type="entry name" value="nsP3_ZBD"/>
</dbReference>
<dbReference type="InterPro" id="IPR027417">
    <property type="entry name" value="P-loop_NTPase"/>
</dbReference>
<dbReference type="InterPro" id="IPR001788">
    <property type="entry name" value="RNA-dep_RNA_pol_alsuvir"/>
</dbReference>
<dbReference type="InterPro" id="IPR007094">
    <property type="entry name" value="RNA-dir_pol_PSvirus"/>
</dbReference>
<dbReference type="InterPro" id="IPR029063">
    <property type="entry name" value="SAM-dependent_MTases_sf"/>
</dbReference>
<dbReference type="InterPro" id="IPR047311">
    <property type="entry name" value="Togaviridae_RdRp"/>
</dbReference>
<dbReference type="InterPro" id="IPR049329">
    <property type="entry name" value="ToMV_Hel_N"/>
</dbReference>
<dbReference type="Pfam" id="PF01661">
    <property type="entry name" value="Macro"/>
    <property type="match status" value="1"/>
</dbReference>
<dbReference type="Pfam" id="PF20852">
    <property type="entry name" value="nsP3_ZBD"/>
    <property type="match status" value="1"/>
</dbReference>
<dbReference type="Pfam" id="PF01707">
    <property type="entry name" value="Peptidase_C9"/>
    <property type="match status" value="1"/>
</dbReference>
<dbReference type="Pfam" id="PF00978">
    <property type="entry name" value="RdRP_2"/>
    <property type="match status" value="1"/>
</dbReference>
<dbReference type="Pfam" id="PF20896">
    <property type="entry name" value="ToMV_Hel_N"/>
    <property type="match status" value="1"/>
</dbReference>
<dbReference type="Pfam" id="PF01443">
    <property type="entry name" value="Viral_helicase1"/>
    <property type="match status" value="1"/>
</dbReference>
<dbReference type="Pfam" id="PF01660">
    <property type="entry name" value="Vmethyltransf"/>
    <property type="match status" value="1"/>
</dbReference>
<dbReference type="SMART" id="SM00506">
    <property type="entry name" value="A1pp"/>
    <property type="match status" value="1"/>
</dbReference>
<dbReference type="SUPFAM" id="SSF56672">
    <property type="entry name" value="DNA/RNA polymerases"/>
    <property type="match status" value="1"/>
</dbReference>
<dbReference type="SUPFAM" id="SSF52949">
    <property type="entry name" value="Macro domain-like"/>
    <property type="match status" value="1"/>
</dbReference>
<dbReference type="SUPFAM" id="SSF52540">
    <property type="entry name" value="P-loop containing nucleoside triphosphate hydrolases"/>
    <property type="match status" value="1"/>
</dbReference>
<dbReference type="SUPFAM" id="SSF53335">
    <property type="entry name" value="S-adenosyl-L-methionine-dependent methyltransferases"/>
    <property type="match status" value="1"/>
</dbReference>
<dbReference type="PROSITE" id="PS51743">
    <property type="entry name" value="ALPHAVIRUS_MT"/>
    <property type="match status" value="1"/>
</dbReference>
<dbReference type="PROSITE" id="PS51154">
    <property type="entry name" value="MACRO"/>
    <property type="match status" value="1"/>
</dbReference>
<dbReference type="PROSITE" id="PS51520">
    <property type="entry name" value="NSP2PRO"/>
    <property type="match status" value="1"/>
</dbReference>
<dbReference type="PROSITE" id="PS51657">
    <property type="entry name" value="PSRV_HELICASE"/>
    <property type="match status" value="1"/>
</dbReference>
<dbReference type="PROSITE" id="PS50507">
    <property type="entry name" value="RDRP_SSRNA_POS"/>
    <property type="match status" value="1"/>
</dbReference>
<keyword id="KW-0067">ATP-binding</keyword>
<keyword id="KW-1262">Eukaryotic host gene expression shutoff by virus</keyword>
<keyword id="KW-1191">Eukaryotic host transcription shutoff by virus</keyword>
<keyword id="KW-0342">GTP-binding</keyword>
<keyword id="KW-0347">Helicase</keyword>
<keyword id="KW-1032">Host cell membrane</keyword>
<keyword id="KW-1034">Host cell projection</keyword>
<keyword id="KW-1035">Host cytoplasm</keyword>
<keyword id="KW-1036">Host cytoplasmic vesicle</keyword>
<keyword id="KW-1190">Host gene expression shutoff by virus</keyword>
<keyword id="KW-1043">Host membrane</keyword>
<keyword id="KW-1048">Host nucleus</keyword>
<keyword id="KW-0945">Host-virus interaction</keyword>
<keyword id="KW-0378">Hydrolase</keyword>
<keyword id="KW-1104">Inhibition of host RNA polymerase II by virus</keyword>
<keyword id="KW-0449">Lipoprotein</keyword>
<keyword id="KW-0472">Membrane</keyword>
<keyword id="KW-0479">Metal-binding</keyword>
<keyword id="KW-0489">Methyltransferase</keyword>
<keyword id="KW-0506">mRNA capping</keyword>
<keyword id="KW-0507">mRNA processing</keyword>
<keyword id="KW-0511">Multifunctional enzyme</keyword>
<keyword id="KW-0547">Nucleotide-binding</keyword>
<keyword id="KW-0548">Nucleotidyltransferase</keyword>
<keyword id="KW-0564">Palmitate</keyword>
<keyword id="KW-0645">Protease</keyword>
<keyword id="KW-1159">RNA suppression of termination</keyword>
<keyword id="KW-0694">RNA-binding</keyword>
<keyword id="KW-0696">RNA-directed RNA polymerase</keyword>
<keyword id="KW-0949">S-adenosyl-L-methionine</keyword>
<keyword id="KW-0788">Thiol protease</keyword>
<keyword id="KW-0808">Transferase</keyword>
<keyword id="KW-0832">Ubl conjugation</keyword>
<keyword id="KW-0693">Viral RNA replication</keyword>
<keyword id="KW-0862">Zinc</keyword>
<organism>
    <name type="scientific">Barmah forest virus</name>
    <name type="common">BFV</name>
    <dbReference type="NCBI Taxonomy" id="11020"/>
    <lineage>
        <taxon>Viruses</taxon>
        <taxon>Riboviria</taxon>
        <taxon>Orthornavirae</taxon>
        <taxon>Kitrinoviricota</taxon>
        <taxon>Alsuviricetes</taxon>
        <taxon>Martellivirales</taxon>
        <taxon>Togaviridae</taxon>
        <taxon>Alphavirus</taxon>
    </lineage>
</organism>
<organismHost>
    <name type="scientific">Anopheles amictus</name>
    <dbReference type="NCBI Taxonomy" id="59117"/>
</organismHost>
<organismHost>
    <name type="scientific">Culex annulirostris</name>
    <name type="common">Common banded mosquito</name>
    <dbReference type="NCBI Taxonomy" id="162997"/>
</organismHost>
<organismHost>
    <name type="scientific">Homo sapiens</name>
    <name type="common">Human</name>
    <dbReference type="NCBI Taxonomy" id="9606"/>
</organismHost>
<organismHost>
    <name type="scientific">Macropus</name>
    <dbReference type="NCBI Taxonomy" id="9312"/>
</organismHost>
<evidence type="ECO:0000250" key="1">
    <source>
        <dbReference type="UniProtKB" id="O90368"/>
    </source>
</evidence>
<evidence type="ECO:0000250" key="2">
    <source>
        <dbReference type="UniProtKB" id="P03317"/>
    </source>
</evidence>
<evidence type="ECO:0000250" key="3">
    <source>
        <dbReference type="UniProtKB" id="P08411"/>
    </source>
</evidence>
<evidence type="ECO:0000250" key="4">
    <source>
        <dbReference type="UniProtKB" id="P27282"/>
    </source>
</evidence>
<evidence type="ECO:0000250" key="5">
    <source>
        <dbReference type="UniProtKB" id="P36328"/>
    </source>
</evidence>
<evidence type="ECO:0000250" key="6">
    <source>
        <dbReference type="UniProtKB" id="Q8JUX6"/>
    </source>
</evidence>
<evidence type="ECO:0000255" key="7">
    <source>
        <dbReference type="PROSITE-ProRule" id="PRU00490"/>
    </source>
</evidence>
<evidence type="ECO:0000255" key="8">
    <source>
        <dbReference type="PROSITE-ProRule" id="PRU00539"/>
    </source>
</evidence>
<evidence type="ECO:0000255" key="9">
    <source>
        <dbReference type="PROSITE-ProRule" id="PRU00853"/>
    </source>
</evidence>
<evidence type="ECO:0000255" key="10">
    <source>
        <dbReference type="PROSITE-ProRule" id="PRU00990"/>
    </source>
</evidence>
<evidence type="ECO:0000255" key="11">
    <source>
        <dbReference type="PROSITE-ProRule" id="PRU01079"/>
    </source>
</evidence>
<evidence type="ECO:0000256" key="12">
    <source>
        <dbReference type="SAM" id="MobiDB-lite"/>
    </source>
</evidence>
<evidence type="ECO:0000305" key="13"/>
<protein>
    <recommendedName>
        <fullName>Polyprotein P1234</fullName>
        <shortName>P1234</shortName>
    </recommendedName>
    <alternativeName>
        <fullName>Non-structural polyprotein</fullName>
    </alternativeName>
    <component>
        <recommendedName>
            <fullName>Polyprotein P123'</fullName>
            <shortName>P123'</shortName>
        </recommendedName>
    </component>
    <component>
        <recommendedName>
            <fullName>Polyprotein P123</fullName>
            <shortName>P123</shortName>
        </recommendedName>
    </component>
    <component>
        <recommendedName>
            <fullName>mRNA-capping enzyme nsP1</fullName>
            <ecNumber evidence="4">2.1.1.-</ecNumber>
            <ecNumber evidence="2">2.7.7.-</ecNumber>
        </recommendedName>
        <alternativeName>
            <fullName>Non-structural protein 1</fullName>
        </alternativeName>
    </component>
    <component>
        <recommendedName>
            <fullName>Protease nsP2</fullName>
            <ecNumber evidence="6">3.4.22.-</ecNumber>
            <ecNumber evidence="6">3.6.1.15</ecNumber>
            <ecNumber evidence="3">3.6.1.74</ecNumber>
            <ecNumber evidence="6">3.6.4.13</ecNumber>
        </recommendedName>
        <alternativeName>
            <fullName>Non-structural protein 2</fullName>
            <shortName>nsP2</shortName>
        </alternativeName>
    </component>
    <component>
        <recommendedName>
            <fullName>Non-structural protein 3'</fullName>
            <shortName>nsP3'</shortName>
            <ecNumber evidence="13">3.1.3.84</ecNumber>
        </recommendedName>
    </component>
    <component>
        <recommendedName>
            <fullName>Non-structural protein 3</fullName>
            <shortName>nsP3</shortName>
            <ecNumber evidence="6">3.1.3.84</ecNumber>
        </recommendedName>
    </component>
    <component>
        <recommendedName>
            <fullName>RNA-directed RNA polymerase nsP4</fullName>
            <ecNumber evidence="2">2.7.7.19</ecNumber>
            <ecNumber evidence="8">2.7.7.48</ecNumber>
        </recommendedName>
        <alternativeName>
            <fullName>Non-structural protein 4</fullName>
            <shortName>nsP4</shortName>
        </alternativeName>
    </component>
</protein>
<reference key="1">
    <citation type="journal article" date="1997" name="Virology">
        <title>Nucleotide sequence of the Barmah forest virus genome.</title>
        <authorList>
            <person name="Lee E."/>
            <person name="Stocks C."/>
            <person name="Lobigs P."/>
            <person name="Hislop A."/>
            <person name="Straub J."/>
            <person name="Marshall I."/>
            <person name="Weir R."/>
            <person name="Dalgarno L."/>
        </authorList>
    </citation>
    <scope>NUCLEOTIDE SEQUENCE [GENOMIC RNA]</scope>
</reference>